<name>LOX_ROSS0</name>
<reference key="1">
    <citation type="submission" date="2008-07" db="EMBL/GenBank/DDBJ databases">
        <authorList>
            <person name="Edwards R."/>
            <person name="Ferriera S."/>
            <person name="Johnson J."/>
            <person name="Kravitz S."/>
            <person name="Beeson K."/>
            <person name="Sutton G."/>
            <person name="Rogers Y.-H."/>
            <person name="Friedman R."/>
            <person name="Frazier M."/>
            <person name="Venter J.C."/>
        </authorList>
    </citation>
    <scope>NUCLEOTIDE SEQUENCE [LARGE SCALE GENOMIC DNA]</scope>
    <source>
        <strain>GAI101</strain>
    </source>
</reference>
<reference key="2">
    <citation type="journal article" date="2021" name="PLoS Comput. Biol.">
        <title>Experimental and computational investigation of enzyme functional annotations uncovers misannotation in the EC 1.1.3.15 enzyme class.</title>
        <authorList>
            <person name="Rembeza E."/>
            <person name="Engqvist M.K.M."/>
        </authorList>
    </citation>
    <scope>FUNCTION</scope>
    <scope>CATALYTIC ACTIVITY</scope>
</reference>
<accession>B7RR92</accession>
<evidence type="ECO:0000250" key="1">
    <source>
        <dbReference type="UniProtKB" id="Q44467"/>
    </source>
</evidence>
<evidence type="ECO:0000255" key="2">
    <source>
        <dbReference type="PROSITE-ProRule" id="PRU00683"/>
    </source>
</evidence>
<evidence type="ECO:0000269" key="3">
    <source>
    </source>
</evidence>
<evidence type="ECO:0000305" key="4"/>
<evidence type="ECO:0000305" key="5">
    <source>
    </source>
</evidence>
<evidence type="ECO:0000312" key="6">
    <source>
        <dbReference type="EMBL" id="EEB82810.1"/>
    </source>
</evidence>
<organism>
    <name type="scientific">Roseobacter sp. (strain GAI101)</name>
    <dbReference type="NCBI Taxonomy" id="391589"/>
    <lineage>
        <taxon>Bacteria</taxon>
        <taxon>Pseudomonadati</taxon>
        <taxon>Pseudomonadota</taxon>
        <taxon>Alphaproteobacteria</taxon>
        <taxon>Rhodobacterales</taxon>
        <taxon>Roseobacteraceae</taxon>
        <taxon>Roseobacter</taxon>
    </lineage>
</organism>
<feature type="chain" id="PRO_0000454875" description="L-lactate oxidase">
    <location>
        <begin position="1"/>
        <end position="370"/>
    </location>
</feature>
<feature type="domain" description="FMN hydroxy acid dehydrogenase" evidence="2">
    <location>
        <begin position="8"/>
        <end position="367"/>
    </location>
</feature>
<feature type="active site" description="Proton acceptor" evidence="1">
    <location>
        <position position="262"/>
    </location>
</feature>
<feature type="binding site" evidence="1">
    <location>
        <position position="34"/>
    </location>
    <ligand>
        <name>pyruvate</name>
        <dbReference type="ChEBI" id="CHEBI:15361"/>
    </ligand>
</feature>
<feature type="binding site" evidence="1">
    <location>
        <begin position="87"/>
        <end position="89"/>
    </location>
    <ligand>
        <name>FMN</name>
        <dbReference type="ChEBI" id="CHEBI:58210"/>
    </ligand>
</feature>
<feature type="binding site" evidence="1">
    <location>
        <position position="116"/>
    </location>
    <ligand>
        <name>FMN</name>
        <dbReference type="ChEBI" id="CHEBI:58210"/>
    </ligand>
</feature>
<feature type="binding site" evidence="1">
    <location>
        <position position="136"/>
    </location>
    <ligand>
        <name>FMN</name>
        <dbReference type="ChEBI" id="CHEBI:58210"/>
    </ligand>
</feature>
<feature type="binding site" evidence="1">
    <location>
        <position position="138"/>
    </location>
    <ligand>
        <name>pyruvate</name>
        <dbReference type="ChEBI" id="CHEBI:15361"/>
    </ligand>
</feature>
<feature type="binding site" evidence="1">
    <location>
        <position position="164"/>
    </location>
    <ligand>
        <name>FMN</name>
        <dbReference type="ChEBI" id="CHEBI:58210"/>
    </ligand>
</feature>
<feature type="binding site" evidence="1">
    <location>
        <position position="173"/>
    </location>
    <ligand>
        <name>pyruvate</name>
        <dbReference type="ChEBI" id="CHEBI:15361"/>
    </ligand>
</feature>
<feature type="binding site" evidence="1">
    <location>
        <position position="238"/>
    </location>
    <ligand>
        <name>FMN</name>
        <dbReference type="ChEBI" id="CHEBI:58210"/>
    </ligand>
</feature>
<feature type="binding site" evidence="1">
    <location>
        <position position="260"/>
    </location>
    <ligand>
        <name>FMN</name>
        <dbReference type="ChEBI" id="CHEBI:58210"/>
    </ligand>
</feature>
<feature type="binding site" evidence="1">
    <location>
        <position position="262"/>
    </location>
    <ligand>
        <name>pyruvate</name>
        <dbReference type="ChEBI" id="CHEBI:15361"/>
    </ligand>
</feature>
<feature type="binding site" evidence="1">
    <location>
        <position position="265"/>
    </location>
    <ligand>
        <name>pyruvate</name>
        <dbReference type="ChEBI" id="CHEBI:15361"/>
    </ligand>
</feature>
<feature type="binding site" evidence="1">
    <location>
        <begin position="293"/>
        <end position="297"/>
    </location>
    <ligand>
        <name>FMN</name>
        <dbReference type="ChEBI" id="CHEBI:58210"/>
    </ligand>
</feature>
<feature type="binding site" evidence="1">
    <location>
        <position position="317"/>
    </location>
    <ligand>
        <name>FMN</name>
        <dbReference type="ChEBI" id="CHEBI:58210"/>
    </ligand>
</feature>
<comment type="function">
    <text evidence="3">Catalyzes the oxidation of (S)-lactate (L-lactate) to pyruvate, with a reduction of O2 to H2O2. Is also able to use glycolate and to a lesser extent 2-hydroxyoctadecanoate as substrate.</text>
</comment>
<comment type="catalytic activity">
    <reaction evidence="3">
        <text>(S)-lactate + O2 = pyruvate + H2O2</text>
        <dbReference type="Rhea" id="RHEA:55868"/>
        <dbReference type="ChEBI" id="CHEBI:15361"/>
        <dbReference type="ChEBI" id="CHEBI:15379"/>
        <dbReference type="ChEBI" id="CHEBI:16240"/>
        <dbReference type="ChEBI" id="CHEBI:16651"/>
    </reaction>
</comment>
<comment type="catalytic activity">
    <reaction evidence="3">
        <text>a (2S)-2-hydroxycarboxylate + O2 = a 2-oxocarboxylate + H2O2</text>
        <dbReference type="Rhea" id="RHEA:16789"/>
        <dbReference type="ChEBI" id="CHEBI:15379"/>
        <dbReference type="ChEBI" id="CHEBI:16240"/>
        <dbReference type="ChEBI" id="CHEBI:35179"/>
        <dbReference type="ChEBI" id="CHEBI:58123"/>
        <dbReference type="EC" id="1.1.3.15"/>
    </reaction>
</comment>
<comment type="catalytic activity">
    <reaction evidence="3">
        <text>glycolate + O2 = glyoxylate + H2O2</text>
        <dbReference type="Rhea" id="RHEA:25311"/>
        <dbReference type="ChEBI" id="CHEBI:15379"/>
        <dbReference type="ChEBI" id="CHEBI:16240"/>
        <dbReference type="ChEBI" id="CHEBI:29805"/>
        <dbReference type="ChEBI" id="CHEBI:36655"/>
        <dbReference type="EC" id="1.1.3.15"/>
    </reaction>
</comment>
<comment type="catalytic activity">
    <reaction evidence="3">
        <text>2-hydroxyoctadecanoate + O2 = 2-oxooctadecanoate + H2O2</text>
        <dbReference type="Rhea" id="RHEA:68964"/>
        <dbReference type="ChEBI" id="CHEBI:15379"/>
        <dbReference type="ChEBI" id="CHEBI:16240"/>
        <dbReference type="ChEBI" id="CHEBI:17162"/>
        <dbReference type="ChEBI" id="CHEBI:76724"/>
    </reaction>
</comment>
<comment type="cofactor">
    <cofactor evidence="1">
        <name>FMN</name>
        <dbReference type="ChEBI" id="CHEBI:58210"/>
    </cofactor>
    <text evidence="1">Binds 1 FMN per subunit.</text>
</comment>
<comment type="subunit">
    <text evidence="1">Homotetramer.</text>
</comment>
<comment type="similarity">
    <text evidence="4">Belongs to the FMN-dependent alpha-hydroxy acid dehydrogenase family.</text>
</comment>
<gene>
    <name evidence="6" type="ORF">RGAI101_4115</name>
</gene>
<sequence>MESADLRDPDGMPVTLSDFEIDAAGRLSADLLAYLEGGAEAGQSVTENRAAFGRIGLLPKLLSPCAGGHTRTTILGKQAPHPIMVAPMAFQNLFHPQGESATAMAAAAQDATMVLSCQTSTPPEDIATIPGRRWFQLYMQADHEATMALVTRAVDCGADALVVTLDAPINGLRDREVAAGFTLPDDVRPVMLDVLPQPPRPHLRDGQSVVFDGMMVFAPTADDLARLIADSPVPVIVKGCLRPADATRLIDLGAQGIIVSNHGGRVLDTVPAPITQLAAVVDAVAGAVPVYVDGGIRRGSDVFKALALGAQAVLVGRPVMHGLIVDGPRGASQVLRRLRDELEVTMALCGCATVADITPDLLTGFSGTGS</sequence>
<proteinExistence type="evidence at protein level"/>
<protein>
    <recommendedName>
        <fullName evidence="4">L-lactate oxidase</fullName>
        <shortName evidence="4">LOX</shortName>
        <ecNumber evidence="3">1.1.3.-</ecNumber>
    </recommendedName>
    <alternativeName>
        <fullName evidence="5">(S)-2-hydroxy-acid oxidase</fullName>
        <ecNumber evidence="3">1.1.3.15</ecNumber>
    </alternativeName>
</protein>
<dbReference type="EC" id="1.1.3.-" evidence="3"/>
<dbReference type="EC" id="1.1.3.15" evidence="3"/>
<dbReference type="EMBL" id="DS999214">
    <property type="protein sequence ID" value="EEB82810.1"/>
    <property type="molecule type" value="Genomic_DNA"/>
</dbReference>
<dbReference type="SMR" id="B7RR92"/>
<dbReference type="STRING" id="391589.RGAI101_4115"/>
<dbReference type="eggNOG" id="COG1304">
    <property type="taxonomic scope" value="Bacteria"/>
</dbReference>
<dbReference type="HOGENOM" id="CLU_020639_0_0_5"/>
<dbReference type="Proteomes" id="UP000002944">
    <property type="component" value="Unassembled WGS sequence"/>
</dbReference>
<dbReference type="GO" id="GO:0003973">
    <property type="term" value="F:(S)-2-hydroxy-acid oxidase activity"/>
    <property type="evidence" value="ECO:0007669"/>
    <property type="project" value="UniProtKB-EC"/>
</dbReference>
<dbReference type="GO" id="GO:0010181">
    <property type="term" value="F:FMN binding"/>
    <property type="evidence" value="ECO:0007669"/>
    <property type="project" value="InterPro"/>
</dbReference>
<dbReference type="CDD" id="cd02809">
    <property type="entry name" value="alpha_hydroxyacid_oxid_FMN"/>
    <property type="match status" value="1"/>
</dbReference>
<dbReference type="Gene3D" id="3.20.20.70">
    <property type="entry name" value="Aldolase class I"/>
    <property type="match status" value="1"/>
</dbReference>
<dbReference type="InterPro" id="IPR013785">
    <property type="entry name" value="Aldolase_TIM"/>
</dbReference>
<dbReference type="InterPro" id="IPR012133">
    <property type="entry name" value="Alpha-hydoxy_acid_DH_FMN"/>
</dbReference>
<dbReference type="InterPro" id="IPR000262">
    <property type="entry name" value="FMN-dep_DH"/>
</dbReference>
<dbReference type="InterPro" id="IPR037396">
    <property type="entry name" value="FMN_HAD"/>
</dbReference>
<dbReference type="PANTHER" id="PTHR10578:SF107">
    <property type="entry name" value="2-HYDROXYACID OXIDASE 1"/>
    <property type="match status" value="1"/>
</dbReference>
<dbReference type="PANTHER" id="PTHR10578">
    <property type="entry name" value="S -2-HYDROXY-ACID OXIDASE-RELATED"/>
    <property type="match status" value="1"/>
</dbReference>
<dbReference type="Pfam" id="PF01070">
    <property type="entry name" value="FMN_dh"/>
    <property type="match status" value="1"/>
</dbReference>
<dbReference type="PIRSF" id="PIRSF000138">
    <property type="entry name" value="Al-hdrx_acd_dh"/>
    <property type="match status" value="1"/>
</dbReference>
<dbReference type="SUPFAM" id="SSF51395">
    <property type="entry name" value="FMN-linked oxidoreductases"/>
    <property type="match status" value="1"/>
</dbReference>
<dbReference type="PROSITE" id="PS51349">
    <property type="entry name" value="FMN_HYDROXY_ACID_DH_2"/>
    <property type="match status" value="1"/>
</dbReference>
<keyword id="KW-0285">Flavoprotein</keyword>
<keyword id="KW-0288">FMN</keyword>
<keyword id="KW-0560">Oxidoreductase</keyword>
<keyword id="KW-1185">Reference proteome</keyword>